<keyword id="KW-0010">Activator</keyword>
<keyword id="KW-1005">Bacterial flagellum biogenesis</keyword>
<keyword id="KW-0963">Cytoplasm</keyword>
<keyword id="KW-1015">Disulfide bond</keyword>
<keyword id="KW-0238">DNA-binding</keyword>
<keyword id="KW-0804">Transcription</keyword>
<keyword id="KW-0805">Transcription regulation</keyword>
<organism>
    <name type="scientific">Salmonella heidelberg (strain SL476)</name>
    <dbReference type="NCBI Taxonomy" id="454169"/>
    <lineage>
        <taxon>Bacteria</taxon>
        <taxon>Pseudomonadati</taxon>
        <taxon>Pseudomonadota</taxon>
        <taxon>Gammaproteobacteria</taxon>
        <taxon>Enterobacterales</taxon>
        <taxon>Enterobacteriaceae</taxon>
        <taxon>Salmonella</taxon>
    </lineage>
</organism>
<gene>
    <name evidence="1" type="primary">flhD</name>
    <name type="ordered locus">SeHA_C2141</name>
</gene>
<proteinExistence type="inferred from homology"/>
<reference key="1">
    <citation type="journal article" date="2011" name="J. Bacteriol.">
        <title>Comparative genomics of 28 Salmonella enterica isolates: evidence for CRISPR-mediated adaptive sublineage evolution.</title>
        <authorList>
            <person name="Fricke W.F."/>
            <person name="Mammel M.K."/>
            <person name="McDermott P.F."/>
            <person name="Tartera C."/>
            <person name="White D.G."/>
            <person name="Leclerc J.E."/>
            <person name="Ravel J."/>
            <person name="Cebula T.A."/>
        </authorList>
    </citation>
    <scope>NUCLEOTIDE SEQUENCE [LARGE SCALE GENOMIC DNA]</scope>
    <source>
        <strain>SL476</strain>
    </source>
</reference>
<dbReference type="EMBL" id="CP001120">
    <property type="protein sequence ID" value="ACF69392.1"/>
    <property type="molecule type" value="Genomic_DNA"/>
</dbReference>
<dbReference type="RefSeq" id="WP_001518146.1">
    <property type="nucleotide sequence ID" value="NC_011083.1"/>
</dbReference>
<dbReference type="SMR" id="B4T825"/>
<dbReference type="KEGG" id="seh:SeHA_C2141"/>
<dbReference type="HOGENOM" id="CLU_144160_0_0_6"/>
<dbReference type="Proteomes" id="UP000001866">
    <property type="component" value="Chromosome"/>
</dbReference>
<dbReference type="GO" id="GO:0005737">
    <property type="term" value="C:cytoplasm"/>
    <property type="evidence" value="ECO:0007669"/>
    <property type="project" value="UniProtKB-SubCell"/>
</dbReference>
<dbReference type="GO" id="GO:0003677">
    <property type="term" value="F:DNA binding"/>
    <property type="evidence" value="ECO:0007669"/>
    <property type="project" value="UniProtKB-UniRule"/>
</dbReference>
<dbReference type="GO" id="GO:0044780">
    <property type="term" value="P:bacterial-type flagellum assembly"/>
    <property type="evidence" value="ECO:0007669"/>
    <property type="project" value="InterPro"/>
</dbReference>
<dbReference type="GO" id="GO:0045893">
    <property type="term" value="P:positive regulation of DNA-templated transcription"/>
    <property type="evidence" value="ECO:0007669"/>
    <property type="project" value="InterPro"/>
</dbReference>
<dbReference type="GO" id="GO:1902208">
    <property type="term" value="P:regulation of bacterial-type flagellum assembly"/>
    <property type="evidence" value="ECO:0007669"/>
    <property type="project" value="UniProtKB-UniRule"/>
</dbReference>
<dbReference type="Gene3D" id="1.10.4000.10">
    <property type="entry name" value="Flagellar transcriptional activator FlhD"/>
    <property type="match status" value="1"/>
</dbReference>
<dbReference type="HAMAP" id="MF_00725">
    <property type="entry name" value="FlhD"/>
    <property type="match status" value="1"/>
</dbReference>
<dbReference type="InterPro" id="IPR023559">
    <property type="entry name" value="Flagellar_FlhD"/>
</dbReference>
<dbReference type="InterPro" id="IPR036194">
    <property type="entry name" value="FlhD_sf"/>
</dbReference>
<dbReference type="NCBIfam" id="NF002783">
    <property type="entry name" value="PRK02909.1-1"/>
    <property type="match status" value="1"/>
</dbReference>
<dbReference type="Pfam" id="PF05247">
    <property type="entry name" value="FlhD"/>
    <property type="match status" value="1"/>
</dbReference>
<dbReference type="SUPFAM" id="SSF63592">
    <property type="entry name" value="Flagellar transcriptional activator FlhD"/>
    <property type="match status" value="1"/>
</dbReference>
<feature type="chain" id="PRO_1000132693" description="Flagellar transcriptional regulator FlhD">
    <location>
        <begin position="1"/>
        <end position="113"/>
    </location>
</feature>
<feature type="disulfide bond" description="Interchain" evidence="1">
    <location>
        <position position="65"/>
    </location>
</feature>
<name>FLHD_SALHS</name>
<evidence type="ECO:0000255" key="1">
    <source>
        <dbReference type="HAMAP-Rule" id="MF_00725"/>
    </source>
</evidence>
<sequence>MHTSELLKHIYDINLSYLLLAQRLIVQDKASAMFRLGINEEMANTLGALTLPQMVKLAETNQLVCHFRFDDHQTITRLTQDSRVDDLQQIHTGIMLSTRLLNEVDDTARKKRA</sequence>
<protein>
    <recommendedName>
        <fullName evidence="1">Flagellar transcriptional regulator FlhD</fullName>
    </recommendedName>
</protein>
<comment type="function">
    <text evidence="1">Functions in complex with FlhC as a master transcriptional regulator that regulates transcription of several flagellar and non-flagellar operons by binding to their promoter region. Activates expression of class 2 flagellar genes, including fliA, which is a flagellum-specific sigma factor that turns on the class 3 genes. Also regulates genes whose products function in a variety of physiological pathways.</text>
</comment>
<comment type="subunit">
    <text evidence="1">Homodimer; disulfide-linked. Forms a heterohexamer composed of two FlhC and four FlhD subunits. Each FlhC binds a FlhD dimer, forming a heterotrimer, and a hexamer assembles by dimerization of two heterotrimers.</text>
</comment>
<comment type="subcellular location">
    <subcellularLocation>
        <location evidence="1">Cytoplasm</location>
    </subcellularLocation>
</comment>
<comment type="domain">
    <text evidence="1">The C-terminal region contains a putative helix-turn-helix (HTH) motif, suggesting that this region may bind DNA.</text>
</comment>
<comment type="similarity">
    <text evidence="1">Belongs to the FlhD family.</text>
</comment>
<accession>B4T825</accession>